<dbReference type="EMBL" id="CR380954">
    <property type="protein sequence ID" value="CAG59817.1"/>
    <property type="molecule type" value="Genomic_DNA"/>
</dbReference>
<dbReference type="RefSeq" id="XP_446884.1">
    <property type="nucleotide sequence ID" value="XM_446884.1"/>
</dbReference>
<dbReference type="SMR" id="Q6FSB0"/>
<dbReference type="FunCoup" id="Q6FSB0">
    <property type="interactions" value="684"/>
</dbReference>
<dbReference type="STRING" id="284593.Q6FSB0"/>
<dbReference type="EnsemblFungi" id="CAGL0H02057g-T">
    <property type="protein sequence ID" value="CAGL0H02057g-T-p1"/>
    <property type="gene ID" value="CAGL0H02057g"/>
</dbReference>
<dbReference type="KEGG" id="cgr:2888567"/>
<dbReference type="CGD" id="CAL0131932">
    <property type="gene designation" value="CAGL0H02057g"/>
</dbReference>
<dbReference type="VEuPathDB" id="FungiDB:B1J91_H02057g"/>
<dbReference type="VEuPathDB" id="FungiDB:CAGL0H02057g"/>
<dbReference type="eggNOG" id="KOG3262">
    <property type="taxonomic scope" value="Eukaryota"/>
</dbReference>
<dbReference type="HOGENOM" id="CLU_080002_1_0_1"/>
<dbReference type="InParanoid" id="Q6FSB0"/>
<dbReference type="OMA" id="KPQDGIV"/>
<dbReference type="Proteomes" id="UP000002428">
    <property type="component" value="Chromosome H"/>
</dbReference>
<dbReference type="GO" id="GO:0031429">
    <property type="term" value="C:box H/ACA snoRNP complex"/>
    <property type="evidence" value="ECO:0007669"/>
    <property type="project" value="EnsemblFungi"/>
</dbReference>
<dbReference type="GO" id="GO:0034513">
    <property type="term" value="F:box H/ACA snoRNA binding"/>
    <property type="evidence" value="ECO:0007669"/>
    <property type="project" value="EnsemblFungi"/>
</dbReference>
<dbReference type="GO" id="GO:0000454">
    <property type="term" value="P:snoRNA guided rRNA pseudouridine synthesis"/>
    <property type="evidence" value="ECO:0007669"/>
    <property type="project" value="EnsemblFungi"/>
</dbReference>
<dbReference type="GO" id="GO:0031120">
    <property type="term" value="P:snRNA pseudouridine synthesis"/>
    <property type="evidence" value="ECO:0007669"/>
    <property type="project" value="EnsemblFungi"/>
</dbReference>
<dbReference type="FunFam" id="2.40.10.230:FF:000001">
    <property type="entry name" value="H/ACA ribonucleoprotein complex subunit"/>
    <property type="match status" value="1"/>
</dbReference>
<dbReference type="Gene3D" id="2.40.10.230">
    <property type="entry name" value="Probable tRNA pseudouridine synthase domain"/>
    <property type="match status" value="1"/>
</dbReference>
<dbReference type="InterPro" id="IPR038664">
    <property type="entry name" value="Gar1/Naf1_Cbf5-bd_sf"/>
</dbReference>
<dbReference type="InterPro" id="IPR007504">
    <property type="entry name" value="H/ACA_rnp_Gar1/Naf1"/>
</dbReference>
<dbReference type="InterPro" id="IPR009000">
    <property type="entry name" value="Transl_B-barrel_sf"/>
</dbReference>
<dbReference type="PANTHER" id="PTHR23237:SF6">
    <property type="entry name" value="H_ACA RIBONUCLEOPROTEIN COMPLEX SUBUNIT 1"/>
    <property type="match status" value="1"/>
</dbReference>
<dbReference type="PANTHER" id="PTHR23237">
    <property type="entry name" value="NUCLEOLAR PROTEIN FAMILY A MEMBER 1 SNORNP PROTEIN GAR1"/>
    <property type="match status" value="1"/>
</dbReference>
<dbReference type="Pfam" id="PF04410">
    <property type="entry name" value="Gar1"/>
    <property type="match status" value="1"/>
</dbReference>
<dbReference type="SUPFAM" id="SSF50447">
    <property type="entry name" value="Translation proteins"/>
    <property type="match status" value="1"/>
</dbReference>
<evidence type="ECO:0000250" key="1">
    <source>
        <dbReference type="UniProtKB" id="P28007"/>
    </source>
</evidence>
<evidence type="ECO:0000256" key="2">
    <source>
        <dbReference type="SAM" id="MobiDB-lite"/>
    </source>
</evidence>
<evidence type="ECO:0000305" key="3"/>
<protein>
    <recommendedName>
        <fullName>H/ACA ribonucleoprotein complex subunit GAR1</fullName>
    </recommendedName>
    <alternativeName>
        <fullName>snoRNP protein GAR1</fullName>
    </alternativeName>
</protein>
<feature type="chain" id="PRO_0000208563" description="H/ACA ribonucleoprotein complex subunit GAR1">
    <location>
        <begin position="1"/>
        <end position="222"/>
    </location>
</feature>
<feature type="region of interest" description="Disordered" evidence="2">
    <location>
        <begin position="1"/>
        <end position="35"/>
    </location>
</feature>
<feature type="region of interest" description="RGG-box 1">
    <location>
        <begin position="4"/>
        <end position="27"/>
    </location>
</feature>
<feature type="region of interest" description="Disordered" evidence="2">
    <location>
        <begin position="124"/>
        <end position="222"/>
    </location>
</feature>
<feature type="region of interest" description="RGG-box 2">
    <location>
        <begin position="148"/>
        <end position="222"/>
    </location>
</feature>
<feature type="compositionally biased region" description="Gly residues" evidence="2">
    <location>
        <begin position="1"/>
        <end position="26"/>
    </location>
</feature>
<feature type="compositionally biased region" description="Gly residues" evidence="2">
    <location>
        <begin position="146"/>
        <end position="222"/>
    </location>
</feature>
<accession>Q6FSB0</accession>
<sequence>MSFRGGFRGGRGGSRGGFGGRGGARGGRPIQQGPPDTVLEMGEFMHPCEGDVVCRSINTKVPYFNAPIYLENKTQVGKVDEILGPLNEVYFTIKCGEGVQATSFKEGDKFYIAPDKLLPIERFIPKPKVAGPPKPKNKKKRSGAPAGRGGARGGFGGRGGSRGGFGGRGGSRGGFGGRGGSRGGFGGRGGSRGGFGGRGGSRGGFGGRGGSRGGFGGRGGRS</sequence>
<comment type="function">
    <text evidence="1">Non-catalytic component of the H/ACA small nucleolar ribonucleoprotein (H/ACA snoRNP), which catalyzes pseudouridylation of rRNA and is required for ribosome biogenesis. This involves the isomerization of uridine such that the ribose is subsequently attached to C5, instead of the normal N1. Pseudouridine ('psi') residues may serve to stabilize the conformation of rRNAs. The H/ACA snoRNP complex also mediates pseudouridylation of other types of RNAs. The H/ACA snoRNP complex mediates pseudouridylation at position 93 in U2 snRNA.</text>
</comment>
<comment type="subunit">
    <text evidence="1">Component of the small nucleolar ribonucleoprotein particles containing H/ACA-type snoRNAs (H/ACA snoRNPs).</text>
</comment>
<comment type="subcellular location">
    <subcellularLocation>
        <location evidence="1">Nucleus</location>
        <location evidence="1">Nucleolus</location>
    </subcellularLocation>
</comment>
<comment type="similarity">
    <text evidence="3">Belongs to the GAR1 family.</text>
</comment>
<name>GAR1_CANGA</name>
<gene>
    <name type="primary">GAR1</name>
    <name type="ordered locus">CAGL0H02057g</name>
</gene>
<organism>
    <name type="scientific">Candida glabrata (strain ATCC 2001 / BCRC 20586 / JCM 3761 / NBRC 0622 / NRRL Y-65 / CBS 138)</name>
    <name type="common">Yeast</name>
    <name type="synonym">Nakaseomyces glabratus</name>
    <dbReference type="NCBI Taxonomy" id="284593"/>
    <lineage>
        <taxon>Eukaryota</taxon>
        <taxon>Fungi</taxon>
        <taxon>Dikarya</taxon>
        <taxon>Ascomycota</taxon>
        <taxon>Saccharomycotina</taxon>
        <taxon>Saccharomycetes</taxon>
        <taxon>Saccharomycetales</taxon>
        <taxon>Saccharomycetaceae</taxon>
        <taxon>Nakaseomyces</taxon>
    </lineage>
</organism>
<keyword id="KW-0539">Nucleus</keyword>
<keyword id="KW-1185">Reference proteome</keyword>
<keyword id="KW-0677">Repeat</keyword>
<keyword id="KW-0687">Ribonucleoprotein</keyword>
<keyword id="KW-0690">Ribosome biogenesis</keyword>
<keyword id="KW-0694">RNA-binding</keyword>
<keyword id="KW-0698">rRNA processing</keyword>
<proteinExistence type="inferred from homology"/>
<reference key="1">
    <citation type="journal article" date="2004" name="Nature">
        <title>Genome evolution in yeasts.</title>
        <authorList>
            <person name="Dujon B."/>
            <person name="Sherman D."/>
            <person name="Fischer G."/>
            <person name="Durrens P."/>
            <person name="Casaregola S."/>
            <person name="Lafontaine I."/>
            <person name="de Montigny J."/>
            <person name="Marck C."/>
            <person name="Neuveglise C."/>
            <person name="Talla E."/>
            <person name="Goffard N."/>
            <person name="Frangeul L."/>
            <person name="Aigle M."/>
            <person name="Anthouard V."/>
            <person name="Babour A."/>
            <person name="Barbe V."/>
            <person name="Barnay S."/>
            <person name="Blanchin S."/>
            <person name="Beckerich J.-M."/>
            <person name="Beyne E."/>
            <person name="Bleykasten C."/>
            <person name="Boisrame A."/>
            <person name="Boyer J."/>
            <person name="Cattolico L."/>
            <person name="Confanioleri F."/>
            <person name="de Daruvar A."/>
            <person name="Despons L."/>
            <person name="Fabre E."/>
            <person name="Fairhead C."/>
            <person name="Ferry-Dumazet H."/>
            <person name="Groppi A."/>
            <person name="Hantraye F."/>
            <person name="Hennequin C."/>
            <person name="Jauniaux N."/>
            <person name="Joyet P."/>
            <person name="Kachouri R."/>
            <person name="Kerrest A."/>
            <person name="Koszul R."/>
            <person name="Lemaire M."/>
            <person name="Lesur I."/>
            <person name="Ma L."/>
            <person name="Muller H."/>
            <person name="Nicaud J.-M."/>
            <person name="Nikolski M."/>
            <person name="Oztas S."/>
            <person name="Ozier-Kalogeropoulos O."/>
            <person name="Pellenz S."/>
            <person name="Potier S."/>
            <person name="Richard G.-F."/>
            <person name="Straub M.-L."/>
            <person name="Suleau A."/>
            <person name="Swennen D."/>
            <person name="Tekaia F."/>
            <person name="Wesolowski-Louvel M."/>
            <person name="Westhof E."/>
            <person name="Wirth B."/>
            <person name="Zeniou-Meyer M."/>
            <person name="Zivanovic Y."/>
            <person name="Bolotin-Fukuhara M."/>
            <person name="Thierry A."/>
            <person name="Bouchier C."/>
            <person name="Caudron B."/>
            <person name="Scarpelli C."/>
            <person name="Gaillardin C."/>
            <person name="Weissenbach J."/>
            <person name="Wincker P."/>
            <person name="Souciet J.-L."/>
        </authorList>
    </citation>
    <scope>NUCLEOTIDE SEQUENCE [LARGE SCALE GENOMIC DNA]</scope>
    <source>
        <strain>ATCC 2001 / BCRC 20586 / JCM 3761 / NBRC 0622 / NRRL Y-65 / CBS 138</strain>
    </source>
</reference>